<name>LAC_CHICK</name>
<sequence>QPKVAPTITLFPPSKEELNEATKATLVCLINDFYPSPVTVDWVIDGSTRSGETTAPQRQSNSQYMASSYLSLSASDWSSHETYTCRVTHNGTSITKTLKRSEC</sequence>
<organism>
    <name type="scientific">Gallus gallus</name>
    <name type="common">Chicken</name>
    <dbReference type="NCBI Taxonomy" id="9031"/>
    <lineage>
        <taxon>Eukaryota</taxon>
        <taxon>Metazoa</taxon>
        <taxon>Chordata</taxon>
        <taxon>Craniata</taxon>
        <taxon>Vertebrata</taxon>
        <taxon>Euteleostomi</taxon>
        <taxon>Archelosauria</taxon>
        <taxon>Archosauria</taxon>
        <taxon>Dinosauria</taxon>
        <taxon>Saurischia</taxon>
        <taxon>Theropoda</taxon>
        <taxon>Coelurosauria</taxon>
        <taxon>Aves</taxon>
        <taxon>Neognathae</taxon>
        <taxon>Galloanserae</taxon>
        <taxon>Galliformes</taxon>
        <taxon>Phasianidae</taxon>
        <taxon>Phasianinae</taxon>
        <taxon>Gallus</taxon>
    </lineage>
</organism>
<accession>P20763</accession>
<dbReference type="EMBL" id="X04768">
    <property type="protein sequence ID" value="CAA28461.1"/>
    <property type="molecule type" value="Genomic_DNA"/>
</dbReference>
<dbReference type="PIR" id="B26167">
    <property type="entry name" value="B26167"/>
</dbReference>
<dbReference type="SMR" id="P20763"/>
<dbReference type="FunCoup" id="P20763">
    <property type="interactions" value="38"/>
</dbReference>
<dbReference type="VEuPathDB" id="HostDB:geneid_416928"/>
<dbReference type="HOGENOM" id="CLU_077975_3_1_1"/>
<dbReference type="InParanoid" id="P20763"/>
<dbReference type="Reactome" id="R-GGA-2132263">
    <property type="pathway name" value="Creation of classical C3 convertase"/>
</dbReference>
<dbReference type="Reactome" id="R-GGA-2132286">
    <property type="pathway name" value="Classical antibody-mediated complement activation"/>
</dbReference>
<dbReference type="Proteomes" id="UP000000539">
    <property type="component" value="Unassembled WGS sequence"/>
</dbReference>
<dbReference type="GO" id="GO:0005576">
    <property type="term" value="C:extracellular region"/>
    <property type="evidence" value="ECO:0000304"/>
    <property type="project" value="Reactome"/>
</dbReference>
<dbReference type="GO" id="GO:0071735">
    <property type="term" value="C:IgG immunoglobulin complex"/>
    <property type="evidence" value="ECO:0000318"/>
    <property type="project" value="GO_Central"/>
</dbReference>
<dbReference type="GO" id="GO:0003823">
    <property type="term" value="F:antigen binding"/>
    <property type="evidence" value="ECO:0000318"/>
    <property type="project" value="GO_Central"/>
</dbReference>
<dbReference type="GO" id="GO:0016064">
    <property type="term" value="P:immunoglobulin mediated immune response"/>
    <property type="evidence" value="ECO:0000318"/>
    <property type="project" value="GO_Central"/>
</dbReference>
<dbReference type="FunFam" id="2.60.40.10:FF:000283">
    <property type="entry name" value="Immunoglobulin kappa constant"/>
    <property type="match status" value="1"/>
</dbReference>
<dbReference type="Gene3D" id="2.60.40.10">
    <property type="entry name" value="Immunoglobulins"/>
    <property type="match status" value="1"/>
</dbReference>
<dbReference type="InterPro" id="IPR007110">
    <property type="entry name" value="Ig-like_dom"/>
</dbReference>
<dbReference type="InterPro" id="IPR036179">
    <property type="entry name" value="Ig-like_dom_sf"/>
</dbReference>
<dbReference type="InterPro" id="IPR013783">
    <property type="entry name" value="Ig-like_fold"/>
</dbReference>
<dbReference type="InterPro" id="IPR003006">
    <property type="entry name" value="Ig/MHC_CS"/>
</dbReference>
<dbReference type="InterPro" id="IPR003597">
    <property type="entry name" value="Ig_C1-set"/>
</dbReference>
<dbReference type="InterPro" id="IPR050160">
    <property type="entry name" value="MHC/Immunoglobulin"/>
</dbReference>
<dbReference type="PANTHER" id="PTHR19944:SF98">
    <property type="entry name" value="IG-LIKE DOMAIN-CONTAINING PROTEIN"/>
    <property type="match status" value="1"/>
</dbReference>
<dbReference type="PANTHER" id="PTHR19944">
    <property type="entry name" value="MHC CLASS II-RELATED"/>
    <property type="match status" value="1"/>
</dbReference>
<dbReference type="Pfam" id="PF07654">
    <property type="entry name" value="C1-set"/>
    <property type="match status" value="1"/>
</dbReference>
<dbReference type="SMART" id="SM00407">
    <property type="entry name" value="IGc1"/>
    <property type="match status" value="1"/>
</dbReference>
<dbReference type="SUPFAM" id="SSF48726">
    <property type="entry name" value="Immunoglobulin"/>
    <property type="match status" value="1"/>
</dbReference>
<dbReference type="PROSITE" id="PS50835">
    <property type="entry name" value="IG_LIKE"/>
    <property type="match status" value="1"/>
</dbReference>
<dbReference type="PROSITE" id="PS00290">
    <property type="entry name" value="IG_MHC"/>
    <property type="match status" value="1"/>
</dbReference>
<evidence type="ECO:0000255" key="1">
    <source>
        <dbReference type="PROSITE-ProRule" id="PRU00114"/>
    </source>
</evidence>
<feature type="chain" id="PRO_0000153606" description="Ig lambda chain C region">
    <location>
        <begin position="1" status="less than"/>
        <end position="103"/>
    </location>
</feature>
<feature type="domain" description="Ig-like">
    <location>
        <begin position="6"/>
        <end position="99"/>
    </location>
</feature>
<feature type="disulfide bond" evidence="1">
    <location>
        <begin position="28"/>
        <end position="85"/>
    </location>
</feature>
<feature type="disulfide bond" description="Interchain (with heavy chain)" evidence="1">
    <location>
        <position position="103"/>
    </location>
</feature>
<feature type="sequence variant">
    <original>N</original>
    <variation>D</variation>
    <location>
        <position position="90"/>
    </location>
</feature>
<feature type="non-terminal residue">
    <location>
        <position position="1"/>
    </location>
</feature>
<proteinExistence type="predicted"/>
<reference key="1">
    <citation type="journal article" date="1987" name="EMBO J.">
        <title>Analyses of chicken immunoglobulin light chain cDNA clones indicate a few germline V lambda genes and allotypes of the C lambda locus.</title>
        <authorList>
            <person name="Parvari R."/>
            <person name="Ziv E."/>
            <person name="Lentner F."/>
            <person name="Tel-Or S."/>
            <person name="Burstein Y."/>
            <person name="Schechter I."/>
        </authorList>
    </citation>
    <scope>NUCLEOTIDE SEQUENCE [GENOMIC DNA]</scope>
</reference>
<keyword id="KW-1015">Disulfide bond</keyword>
<keyword id="KW-0393">Immunoglobulin domain</keyword>
<keyword id="KW-1185">Reference proteome</keyword>
<protein>
    <recommendedName>
        <fullName>Ig lambda chain C region</fullName>
    </recommendedName>
</protein>